<feature type="chain" id="PRO_0000422241" description="Cullin-associated NEDD8-dissociated protein 1">
    <location>
        <begin position="1"/>
        <end position="1248"/>
    </location>
</feature>
<feature type="repeat" description="HEAT 1">
    <location>
        <begin position="44"/>
        <end position="82"/>
    </location>
</feature>
<feature type="repeat" description="HEAT 2">
    <location>
        <begin position="127"/>
        <end position="165"/>
    </location>
</feature>
<feature type="repeat" description="HEAT 3">
    <location>
        <begin position="168"/>
        <end position="206"/>
    </location>
</feature>
<feature type="repeat" description="HEAT 4">
    <location>
        <begin position="365"/>
        <end position="403"/>
    </location>
</feature>
<feature type="repeat" description="HEAT 5">
    <location>
        <begin position="425"/>
        <end position="463"/>
    </location>
</feature>
<feature type="repeat" description="HEAT 6">
    <location>
        <begin position="510"/>
        <end position="548"/>
    </location>
</feature>
<feature type="repeat" description="HEAT 7">
    <location>
        <begin position="604"/>
        <end position="642"/>
    </location>
</feature>
<feature type="repeat" description="HEAT 8">
    <location>
        <begin position="644"/>
        <end position="682"/>
    </location>
</feature>
<feature type="repeat" description="HEAT 9">
    <location>
        <begin position="861"/>
        <end position="900"/>
    </location>
</feature>
<feature type="repeat" description="HEAT 10">
    <location>
        <begin position="976"/>
        <end position="1014"/>
    </location>
</feature>
<feature type="repeat" description="HEAT 11">
    <location>
        <begin position="1054"/>
        <end position="1093"/>
    </location>
</feature>
<feature type="sequence conflict" description="In Ref. 3; AAY84910." evidence="2" ref="3">
    <original>I</original>
    <variation>T</variation>
    <location>
        <position position="292"/>
    </location>
</feature>
<name>CAND1_DROME</name>
<proteinExistence type="evidence at transcript level"/>
<sequence length="1248" mass="139355">MASHQYHQIANLLEKMTSTDKDFRFMATNDLMTELQKDSIILDDESEKKVVRMVLKLLEDKNGEVQNLAVKCLGPLVNKVKEIQVETIVDSLCANMMSNTEQLRDISSIGLKTVIAELPQSSNSLAPNVCQRITGKLSTAIEKEDVSVKLESLDILADLLSRFGEFLVPFHSTILKALMPQLASSRQAVRKRTIVALSFLLIQANSNAYNGVIDHLLDGLENPPNPAAIRTYIQCLASICRQAGHRLCNHIDRSMLLLSQYSQRDDDELREFCLQACEAFVMRCPDAINPHIPMILELCLNYITYDPNYNYETDDGDTGNAMDTEDDEYVDSEEYSDDDDMSWKVRRAAAKCLEVLISTRQELVEDFYRSLSPALIARFKEREENVKSDIFHAYVALLKNTRLTDDVANDHDSMDQVSGPTSLLIEQLPLIVKAIQPLMREKSMKTRQDCFLLLRELLNSLPGALGPYLDSIVPGISYSLNDKSSTSNMKIESLGFLYSLLQGHPPHVFHPHIPLLVPLVVTSVFDPFYKIATEALLVLQQLVKVIRPLEPNAAKSDFDAPSFVGQVYSCTLQKLKVTDVDQEVKERAIACMGQIIANMGDMLQNELAVCLPIFMERLKNEVTRLSSVKALTLIAASSLRIDLTPILHDVLPALGTFLRKNHRALKLHSLDLINKIVINYSSNFEANLLQTAIVEIPPLISDSDLHVAQYSLTLLSTVARRQPQALVGIHEQFLRSVLILVRSPLLQGSALNCTLELFQALVQTQLSGLDYHSLVSKLMAPVLGGNGDVKSRATAGAPSEVVQLHKQAYHSSAKCIAALTQQCPQVATPLATKLITDLQKRNDTEIIFCLLTIGEIGRHFDLSSIQVLPQTIIECFGATSEDVKAAASHALGAVSVGSLQTYLPLILHEIEVQPKRQYLLLHSLKEVISSLSVSPSGLAQLLPSVPSIWDQLFKHCECSEEGSRNVVAECLGKLVLVNPDELLPQLQQALRSESATMRTVVVSSVKFTISDQPQPIDVLLKQNIGEFLFALRDPEPQVRRVALVAFNSAVHNKPSLVRDLLPTLLPWLYSETKVKSELIREVEMGPFKHTVDDGLDIRKAAFECMYTLLEQGLDRVDVMQFLDHVQAGLCDHYDIKMLTYLMTARLAILCPDKVLLRLDQFIQQLRDTCTHKVKANSVKQEYEKQDELKRSALRAVSALSQIPKANKNQQLVDFLKSIKETPELNKIFEYIQKDSITGSSDIIVMDQS</sequence>
<keyword id="KW-1185">Reference proteome</keyword>
<keyword id="KW-0677">Repeat</keyword>
<keyword id="KW-0833">Ubl conjugation pathway</keyword>
<protein>
    <recommendedName>
        <fullName>Cullin-associated NEDD8-dissociated protein 1</fullName>
    </recommendedName>
    <alternativeName>
        <fullName>Cullin-associated and neddylation-dissociated protein 1</fullName>
    </alternativeName>
</protein>
<comment type="function">
    <text evidence="3">Key assembly factor of SCF (SKP1-CUL1-F-box protein) E3 ubiquitin ligase complexes that promotes the exchange of the substrate-recognition F-box subunit in SCF complexes, thereby playing a key role in the cellular repertoire of SCF complexes. Acts as a F-box protein exchange factor. Probably plays a similar role in other cullin-RING E3 ubiquitin ligase complexes (Probable).</text>
</comment>
<comment type="disruption phenotype">
    <text evidence="1">Lethality in the pupal stage. Accumulation of neddylated Cul3 and stabilization of the Cul3 adapter protein HIB. Enhances protein degradation of Cubitus interruptus (Ci), suggesting that Cul3-RING ligase activity is enhanced in the absence of Cand1.</text>
</comment>
<comment type="similarity">
    <text evidence="2">Belongs to the CAND family.</text>
</comment>
<reference key="1">
    <citation type="journal article" date="2000" name="Science">
        <title>The genome sequence of Drosophila melanogaster.</title>
        <authorList>
            <person name="Adams M.D."/>
            <person name="Celniker S.E."/>
            <person name="Holt R.A."/>
            <person name="Evans C.A."/>
            <person name="Gocayne J.D."/>
            <person name="Amanatides P.G."/>
            <person name="Scherer S.E."/>
            <person name="Li P.W."/>
            <person name="Hoskins R.A."/>
            <person name="Galle R.F."/>
            <person name="George R.A."/>
            <person name="Lewis S.E."/>
            <person name="Richards S."/>
            <person name="Ashburner M."/>
            <person name="Henderson S.N."/>
            <person name="Sutton G.G."/>
            <person name="Wortman J.R."/>
            <person name="Yandell M.D."/>
            <person name="Zhang Q."/>
            <person name="Chen L.X."/>
            <person name="Brandon R.C."/>
            <person name="Rogers Y.-H.C."/>
            <person name="Blazej R.G."/>
            <person name="Champe M."/>
            <person name="Pfeiffer B.D."/>
            <person name="Wan K.H."/>
            <person name="Doyle C."/>
            <person name="Baxter E.G."/>
            <person name="Helt G."/>
            <person name="Nelson C.R."/>
            <person name="Miklos G.L.G."/>
            <person name="Abril J.F."/>
            <person name="Agbayani A."/>
            <person name="An H.-J."/>
            <person name="Andrews-Pfannkoch C."/>
            <person name="Baldwin D."/>
            <person name="Ballew R.M."/>
            <person name="Basu A."/>
            <person name="Baxendale J."/>
            <person name="Bayraktaroglu L."/>
            <person name="Beasley E.M."/>
            <person name="Beeson K.Y."/>
            <person name="Benos P.V."/>
            <person name="Berman B.P."/>
            <person name="Bhandari D."/>
            <person name="Bolshakov S."/>
            <person name="Borkova D."/>
            <person name="Botchan M.R."/>
            <person name="Bouck J."/>
            <person name="Brokstein P."/>
            <person name="Brottier P."/>
            <person name="Burtis K.C."/>
            <person name="Busam D.A."/>
            <person name="Butler H."/>
            <person name="Cadieu E."/>
            <person name="Center A."/>
            <person name="Chandra I."/>
            <person name="Cherry J.M."/>
            <person name="Cawley S."/>
            <person name="Dahlke C."/>
            <person name="Davenport L.B."/>
            <person name="Davies P."/>
            <person name="de Pablos B."/>
            <person name="Delcher A."/>
            <person name="Deng Z."/>
            <person name="Mays A.D."/>
            <person name="Dew I."/>
            <person name="Dietz S.M."/>
            <person name="Dodson K."/>
            <person name="Doup L.E."/>
            <person name="Downes M."/>
            <person name="Dugan-Rocha S."/>
            <person name="Dunkov B.C."/>
            <person name="Dunn P."/>
            <person name="Durbin K.J."/>
            <person name="Evangelista C.C."/>
            <person name="Ferraz C."/>
            <person name="Ferriera S."/>
            <person name="Fleischmann W."/>
            <person name="Fosler C."/>
            <person name="Gabrielian A.E."/>
            <person name="Garg N.S."/>
            <person name="Gelbart W.M."/>
            <person name="Glasser K."/>
            <person name="Glodek A."/>
            <person name="Gong F."/>
            <person name="Gorrell J.H."/>
            <person name="Gu Z."/>
            <person name="Guan P."/>
            <person name="Harris M."/>
            <person name="Harris N.L."/>
            <person name="Harvey D.A."/>
            <person name="Heiman T.J."/>
            <person name="Hernandez J.R."/>
            <person name="Houck J."/>
            <person name="Hostin D."/>
            <person name="Houston K.A."/>
            <person name="Howland T.J."/>
            <person name="Wei M.-H."/>
            <person name="Ibegwam C."/>
            <person name="Jalali M."/>
            <person name="Kalush F."/>
            <person name="Karpen G.H."/>
            <person name="Ke Z."/>
            <person name="Kennison J.A."/>
            <person name="Ketchum K.A."/>
            <person name="Kimmel B.E."/>
            <person name="Kodira C.D."/>
            <person name="Kraft C.L."/>
            <person name="Kravitz S."/>
            <person name="Kulp D."/>
            <person name="Lai Z."/>
            <person name="Lasko P."/>
            <person name="Lei Y."/>
            <person name="Levitsky A.A."/>
            <person name="Li J.H."/>
            <person name="Li Z."/>
            <person name="Liang Y."/>
            <person name="Lin X."/>
            <person name="Liu X."/>
            <person name="Mattei B."/>
            <person name="McIntosh T.C."/>
            <person name="McLeod M.P."/>
            <person name="McPherson D."/>
            <person name="Merkulov G."/>
            <person name="Milshina N.V."/>
            <person name="Mobarry C."/>
            <person name="Morris J."/>
            <person name="Moshrefi A."/>
            <person name="Mount S.M."/>
            <person name="Moy M."/>
            <person name="Murphy B."/>
            <person name="Murphy L."/>
            <person name="Muzny D.M."/>
            <person name="Nelson D.L."/>
            <person name="Nelson D.R."/>
            <person name="Nelson K.A."/>
            <person name="Nixon K."/>
            <person name="Nusskern D.R."/>
            <person name="Pacleb J.M."/>
            <person name="Palazzolo M."/>
            <person name="Pittman G.S."/>
            <person name="Pan S."/>
            <person name="Pollard J."/>
            <person name="Puri V."/>
            <person name="Reese M.G."/>
            <person name="Reinert K."/>
            <person name="Remington K."/>
            <person name="Saunders R.D.C."/>
            <person name="Scheeler F."/>
            <person name="Shen H."/>
            <person name="Shue B.C."/>
            <person name="Siden-Kiamos I."/>
            <person name="Simpson M."/>
            <person name="Skupski M.P."/>
            <person name="Smith T.J."/>
            <person name="Spier E."/>
            <person name="Spradling A.C."/>
            <person name="Stapleton M."/>
            <person name="Strong R."/>
            <person name="Sun E."/>
            <person name="Svirskas R."/>
            <person name="Tector C."/>
            <person name="Turner R."/>
            <person name="Venter E."/>
            <person name="Wang A.H."/>
            <person name="Wang X."/>
            <person name="Wang Z.-Y."/>
            <person name="Wassarman D.A."/>
            <person name="Weinstock G.M."/>
            <person name="Weissenbach J."/>
            <person name="Williams S.M."/>
            <person name="Woodage T."/>
            <person name="Worley K.C."/>
            <person name="Wu D."/>
            <person name="Yang S."/>
            <person name="Yao Q.A."/>
            <person name="Ye J."/>
            <person name="Yeh R.-F."/>
            <person name="Zaveri J.S."/>
            <person name="Zhan M."/>
            <person name="Zhang G."/>
            <person name="Zhao Q."/>
            <person name="Zheng L."/>
            <person name="Zheng X.H."/>
            <person name="Zhong F.N."/>
            <person name="Zhong W."/>
            <person name="Zhou X."/>
            <person name="Zhu S.C."/>
            <person name="Zhu X."/>
            <person name="Smith H.O."/>
            <person name="Gibbs R.A."/>
            <person name="Myers E.W."/>
            <person name="Rubin G.M."/>
            <person name="Venter J.C."/>
        </authorList>
    </citation>
    <scope>NUCLEOTIDE SEQUENCE [LARGE SCALE GENOMIC DNA]</scope>
    <source>
        <strain>Berkeley</strain>
    </source>
</reference>
<reference key="2">
    <citation type="journal article" date="2002" name="Genome Biol.">
        <title>Annotation of the Drosophila melanogaster euchromatic genome: a systematic review.</title>
        <authorList>
            <person name="Misra S."/>
            <person name="Crosby M.A."/>
            <person name="Mungall C.J."/>
            <person name="Matthews B.B."/>
            <person name="Campbell K.S."/>
            <person name="Hradecky P."/>
            <person name="Huang Y."/>
            <person name="Kaminker J.S."/>
            <person name="Millburn G.H."/>
            <person name="Prochnik S.E."/>
            <person name="Smith C.D."/>
            <person name="Tupy J.L."/>
            <person name="Whitfield E.J."/>
            <person name="Bayraktaroglu L."/>
            <person name="Berman B.P."/>
            <person name="Bettencourt B.R."/>
            <person name="Celniker S.E."/>
            <person name="de Grey A.D.N.J."/>
            <person name="Drysdale R.A."/>
            <person name="Harris N.L."/>
            <person name="Richter J."/>
            <person name="Russo S."/>
            <person name="Schroeder A.J."/>
            <person name="Shu S.Q."/>
            <person name="Stapleton M."/>
            <person name="Yamada C."/>
            <person name="Ashburner M."/>
            <person name="Gelbart W.M."/>
            <person name="Rubin G.M."/>
            <person name="Lewis S.E."/>
        </authorList>
    </citation>
    <scope>GENOME REANNOTATION</scope>
    <source>
        <strain>Berkeley</strain>
    </source>
</reference>
<reference key="3">
    <citation type="submission" date="2012-04" db="EMBL/GenBank/DDBJ databases">
        <authorList>
            <person name="Carlson J."/>
            <person name="Booth B."/>
            <person name="Frise E."/>
            <person name="Park S."/>
            <person name="Wan K."/>
            <person name="Yu C."/>
            <person name="Celniker S."/>
        </authorList>
    </citation>
    <scope>NUCLEOTIDE SEQUENCE [LARGE SCALE MRNA]</scope>
    <source>
        <strain>Berkeley</strain>
    </source>
</reference>
<reference key="4">
    <citation type="journal article" date="2010" name="Dev. Biol.">
        <title>Drosophila Cand1 regulates Cullin3-dependent E3 ligases by affecting the neddylation of Cullin3 and by controlling the stability of Cullin3 and adaptor protein.</title>
        <authorList>
            <person name="Kim S.H."/>
            <person name="Kim H.J."/>
            <person name="Kim S."/>
            <person name="Yim J."/>
        </authorList>
    </citation>
    <scope>FUNCTION</scope>
    <scope>DISRUPTION PHENOTYPE</scope>
</reference>
<organism>
    <name type="scientific">Drosophila melanogaster</name>
    <name type="common">Fruit fly</name>
    <dbReference type="NCBI Taxonomy" id="7227"/>
    <lineage>
        <taxon>Eukaryota</taxon>
        <taxon>Metazoa</taxon>
        <taxon>Ecdysozoa</taxon>
        <taxon>Arthropoda</taxon>
        <taxon>Hexapoda</taxon>
        <taxon>Insecta</taxon>
        <taxon>Pterygota</taxon>
        <taxon>Neoptera</taxon>
        <taxon>Endopterygota</taxon>
        <taxon>Diptera</taxon>
        <taxon>Brachycera</taxon>
        <taxon>Muscomorpha</taxon>
        <taxon>Ephydroidea</taxon>
        <taxon>Drosophilidae</taxon>
        <taxon>Drosophila</taxon>
        <taxon>Sophophora</taxon>
    </lineage>
</organism>
<dbReference type="EMBL" id="AE014134">
    <property type="protein sequence ID" value="AAF52924.1"/>
    <property type="molecule type" value="Genomic_DNA"/>
</dbReference>
<dbReference type="EMBL" id="BT023510">
    <property type="protein sequence ID" value="AAY84910.1"/>
    <property type="molecule type" value="mRNA"/>
</dbReference>
<dbReference type="EMBL" id="BT133409">
    <property type="protein sequence ID" value="AFH55508.1"/>
    <property type="molecule type" value="mRNA"/>
</dbReference>
<dbReference type="RefSeq" id="NP_001260333.1">
    <property type="nucleotide sequence ID" value="NM_001273404.1"/>
</dbReference>
<dbReference type="RefSeq" id="NP_609389.1">
    <property type="nucleotide sequence ID" value="NM_135545.3"/>
</dbReference>
<dbReference type="SMR" id="Q9VKY2"/>
<dbReference type="BioGRID" id="60488">
    <property type="interactions" value="25"/>
</dbReference>
<dbReference type="FunCoup" id="Q9VKY2">
    <property type="interactions" value="2120"/>
</dbReference>
<dbReference type="IntAct" id="Q9VKY2">
    <property type="interactions" value="38"/>
</dbReference>
<dbReference type="MINT" id="Q9VKY2"/>
<dbReference type="STRING" id="7227.FBpp0304507"/>
<dbReference type="PaxDb" id="7227-FBpp0304507"/>
<dbReference type="DNASU" id="34403"/>
<dbReference type="EnsemblMetazoa" id="FBtr0080054">
    <property type="protein sequence ID" value="FBpp0079643"/>
    <property type="gene ID" value="FBgn0027568"/>
</dbReference>
<dbReference type="EnsemblMetazoa" id="FBtr0332198">
    <property type="protein sequence ID" value="FBpp0304507"/>
    <property type="gene ID" value="FBgn0027568"/>
</dbReference>
<dbReference type="GeneID" id="34403"/>
<dbReference type="KEGG" id="dme:Dmel_CG5366"/>
<dbReference type="UCSC" id="CG5366-RA">
    <property type="organism name" value="d. melanogaster"/>
</dbReference>
<dbReference type="AGR" id="FB:FBgn0027568"/>
<dbReference type="CTD" id="55832"/>
<dbReference type="FlyBase" id="FBgn0027568">
    <property type="gene designation" value="Cand1"/>
</dbReference>
<dbReference type="VEuPathDB" id="VectorBase:FBgn0027568"/>
<dbReference type="eggNOG" id="KOG1824">
    <property type="taxonomic scope" value="Eukaryota"/>
</dbReference>
<dbReference type="GeneTree" id="ENSGT00390000017740"/>
<dbReference type="HOGENOM" id="CLU_007157_0_0_1"/>
<dbReference type="InParanoid" id="Q9VKY2"/>
<dbReference type="OMA" id="AYIPHFQ"/>
<dbReference type="OrthoDB" id="6260732at2759"/>
<dbReference type="PhylomeDB" id="Q9VKY2"/>
<dbReference type="Reactome" id="R-DME-6798695">
    <property type="pathway name" value="Neutrophil degranulation"/>
</dbReference>
<dbReference type="Reactome" id="R-DME-8951664">
    <property type="pathway name" value="Neddylation"/>
</dbReference>
<dbReference type="Reactome" id="R-DME-917937">
    <property type="pathway name" value="Iron uptake and transport"/>
</dbReference>
<dbReference type="SignaLink" id="Q9VKY2"/>
<dbReference type="BioGRID-ORCS" id="34403">
    <property type="hits" value="0 hits in 3 CRISPR screens"/>
</dbReference>
<dbReference type="GenomeRNAi" id="34403"/>
<dbReference type="PRO" id="PR:Q9VKY2"/>
<dbReference type="Proteomes" id="UP000000803">
    <property type="component" value="Chromosome 2L"/>
</dbReference>
<dbReference type="Bgee" id="FBgn0027568">
    <property type="expression patterns" value="Expressed in seminal fluid secreting gland and 71 other cell types or tissues"/>
</dbReference>
<dbReference type="ExpressionAtlas" id="Q9VKY2">
    <property type="expression patterns" value="baseline and differential"/>
</dbReference>
<dbReference type="GO" id="GO:0005634">
    <property type="term" value="C:nucleus"/>
    <property type="evidence" value="ECO:0000318"/>
    <property type="project" value="GO_Central"/>
</dbReference>
<dbReference type="GO" id="GO:2000435">
    <property type="term" value="P:negative regulation of protein neddylation"/>
    <property type="evidence" value="ECO:0000315"/>
    <property type="project" value="FlyBase"/>
</dbReference>
<dbReference type="GO" id="GO:0016567">
    <property type="term" value="P:protein ubiquitination"/>
    <property type="evidence" value="ECO:0000318"/>
    <property type="project" value="GO_Central"/>
</dbReference>
<dbReference type="GO" id="GO:0031647">
    <property type="term" value="P:regulation of protein stability"/>
    <property type="evidence" value="ECO:0000315"/>
    <property type="project" value="FlyBase"/>
</dbReference>
<dbReference type="GO" id="GO:0010265">
    <property type="term" value="P:SCF complex assembly"/>
    <property type="evidence" value="ECO:0000318"/>
    <property type="project" value="GO_Central"/>
</dbReference>
<dbReference type="Gene3D" id="1.25.10.10">
    <property type="entry name" value="Leucine-rich Repeat Variant"/>
    <property type="match status" value="1"/>
</dbReference>
<dbReference type="InterPro" id="IPR011989">
    <property type="entry name" value="ARM-like"/>
</dbReference>
<dbReference type="InterPro" id="IPR016024">
    <property type="entry name" value="ARM-type_fold"/>
</dbReference>
<dbReference type="InterPro" id="IPR039852">
    <property type="entry name" value="CAND1/CAND2"/>
</dbReference>
<dbReference type="InterPro" id="IPR013932">
    <property type="entry name" value="TATA-bd_TIP120"/>
</dbReference>
<dbReference type="PANTHER" id="PTHR12696">
    <property type="entry name" value="TIP120"/>
    <property type="match status" value="1"/>
</dbReference>
<dbReference type="Pfam" id="PF08623">
    <property type="entry name" value="TIP120"/>
    <property type="match status" value="1"/>
</dbReference>
<dbReference type="SUPFAM" id="SSF48371">
    <property type="entry name" value="ARM repeat"/>
    <property type="match status" value="1"/>
</dbReference>
<accession>Q9VKY2</accession>
<accession>Q4QQA6</accession>
<accession>Q9Y127</accession>
<evidence type="ECO:0000269" key="1">
    <source>
    </source>
</evidence>
<evidence type="ECO:0000305" key="2"/>
<evidence type="ECO:0000305" key="3">
    <source>
    </source>
</evidence>
<gene>
    <name type="primary">Cand1</name>
    <name type="ORF">CG5366</name>
</gene>